<accession>A5GMH7</accession>
<keyword id="KW-0460">Magnesium</keyword>
<keyword id="KW-0479">Metal-binding</keyword>
<keyword id="KW-1185">Reference proteome</keyword>
<keyword id="KW-0784">Thiamine biosynthesis</keyword>
<keyword id="KW-0808">Transferase</keyword>
<evidence type="ECO:0000255" key="1">
    <source>
        <dbReference type="HAMAP-Rule" id="MF_01327"/>
    </source>
</evidence>
<name>THIE_SYNPW</name>
<sequence length="353" mass="38820">MESMPVAPSTDPRVARLIDANLDRAREGLRVIEDWCRFGLDRQDLVVPLKDWRQQLGQLHHDRYRQARSTATDSAAGLGHPAQDTRTDSVAIVKANASRVQEALRVIEEFARNGDAVLARTAAAVRYALYDHEVRILEACGHSRRKQQLEDARLCLITDPGADDGCERLVQRVEAALQSGVSLVQYRRKHGSDGLRLQEAQQLAQLCHEHNALFIVNDRIDLALLVNADGVHLGQEDLPYREARRLLGSAKLIGRSTHKLAQLHEAQEQGADYVGVGPVFATATKADRHPAGLSWVKEACEAARIPWFAIGGITATTLPRVREAGAQRVAVVSAIMASEDPASASRQLLDLLT</sequence>
<protein>
    <recommendedName>
        <fullName evidence="1">Thiamine-phosphate synthase</fullName>
        <shortName evidence="1">TP synthase</shortName>
        <shortName evidence="1">TPS</shortName>
        <ecNumber evidence="1">2.5.1.3</ecNumber>
    </recommendedName>
    <alternativeName>
        <fullName evidence="1">Thiamine-phosphate pyrophosphorylase</fullName>
        <shortName evidence="1">TMP pyrophosphorylase</shortName>
        <shortName evidence="1">TMP-PPase</shortName>
    </alternativeName>
</protein>
<proteinExistence type="inferred from homology"/>
<organism>
    <name type="scientific">Synechococcus sp. (strain WH7803)</name>
    <dbReference type="NCBI Taxonomy" id="32051"/>
    <lineage>
        <taxon>Bacteria</taxon>
        <taxon>Bacillati</taxon>
        <taxon>Cyanobacteriota</taxon>
        <taxon>Cyanophyceae</taxon>
        <taxon>Synechococcales</taxon>
        <taxon>Synechococcaceae</taxon>
        <taxon>Synechococcus</taxon>
    </lineage>
</organism>
<feature type="chain" id="PRO_1000052341" description="Thiamine-phosphate synthase">
    <location>
        <begin position="1"/>
        <end position="353"/>
    </location>
</feature>
<feature type="region of interest" description="Unknown">
    <location>
        <begin position="1"/>
        <end position="128"/>
    </location>
</feature>
<feature type="region of interest" description="Thiamine-phosphate synthase">
    <location>
        <begin position="129"/>
        <end position="353"/>
    </location>
</feature>
<feature type="binding site" evidence="1">
    <location>
        <begin position="185"/>
        <end position="189"/>
    </location>
    <ligand>
        <name>4-amino-2-methyl-5-(diphosphooxymethyl)pyrimidine</name>
        <dbReference type="ChEBI" id="CHEBI:57841"/>
    </ligand>
</feature>
<feature type="binding site" evidence="1">
    <location>
        <position position="217"/>
    </location>
    <ligand>
        <name>4-amino-2-methyl-5-(diphosphooxymethyl)pyrimidine</name>
        <dbReference type="ChEBI" id="CHEBI:57841"/>
    </ligand>
</feature>
<feature type="binding site" evidence="1">
    <location>
        <position position="218"/>
    </location>
    <ligand>
        <name>Mg(2+)</name>
        <dbReference type="ChEBI" id="CHEBI:18420"/>
    </ligand>
</feature>
<feature type="binding site" evidence="1">
    <location>
        <position position="237"/>
    </location>
    <ligand>
        <name>Mg(2+)</name>
        <dbReference type="ChEBI" id="CHEBI:18420"/>
    </ligand>
</feature>
<feature type="binding site" evidence="1">
    <location>
        <position position="256"/>
    </location>
    <ligand>
        <name>4-amino-2-methyl-5-(diphosphooxymethyl)pyrimidine</name>
        <dbReference type="ChEBI" id="CHEBI:57841"/>
    </ligand>
</feature>
<feature type="binding site" evidence="1">
    <location>
        <begin position="282"/>
        <end position="284"/>
    </location>
    <ligand>
        <name>2-[(2R,5Z)-2-carboxy-4-methylthiazol-5(2H)-ylidene]ethyl phosphate</name>
        <dbReference type="ChEBI" id="CHEBI:62899"/>
    </ligand>
</feature>
<feature type="binding site" evidence="1">
    <location>
        <position position="285"/>
    </location>
    <ligand>
        <name>4-amino-2-methyl-5-(diphosphooxymethyl)pyrimidine</name>
        <dbReference type="ChEBI" id="CHEBI:57841"/>
    </ligand>
</feature>
<feature type="binding site" evidence="1">
    <location>
        <position position="312"/>
    </location>
    <ligand>
        <name>2-[(2R,5Z)-2-carboxy-4-methylthiazol-5(2H)-ylidene]ethyl phosphate</name>
        <dbReference type="ChEBI" id="CHEBI:62899"/>
    </ligand>
</feature>
<feature type="binding site" evidence="1">
    <location>
        <begin position="332"/>
        <end position="333"/>
    </location>
    <ligand>
        <name>2-[(2R,5Z)-2-carboxy-4-methylthiazol-5(2H)-ylidene]ethyl phosphate</name>
        <dbReference type="ChEBI" id="CHEBI:62899"/>
    </ligand>
</feature>
<reference key="1">
    <citation type="submission" date="2006-05" db="EMBL/GenBank/DDBJ databases">
        <authorList>
            <consortium name="Genoscope"/>
        </authorList>
    </citation>
    <scope>NUCLEOTIDE SEQUENCE [LARGE SCALE GENOMIC DNA]</scope>
    <source>
        <strain>WH7803</strain>
    </source>
</reference>
<gene>
    <name evidence="1" type="primary">thiE</name>
    <name type="ordered locus">SynWH7803_1716</name>
</gene>
<dbReference type="EC" id="2.5.1.3" evidence="1"/>
<dbReference type="EMBL" id="CT971583">
    <property type="protein sequence ID" value="CAK24142.1"/>
    <property type="molecule type" value="Genomic_DNA"/>
</dbReference>
<dbReference type="SMR" id="A5GMH7"/>
<dbReference type="STRING" id="32051.SynWH7803_1716"/>
<dbReference type="KEGG" id="syx:SynWH7803_1716"/>
<dbReference type="eggNOG" id="COG0352">
    <property type="taxonomic scope" value="Bacteria"/>
</dbReference>
<dbReference type="HOGENOM" id="CLU_064900_0_0_3"/>
<dbReference type="OrthoDB" id="9812206at2"/>
<dbReference type="UniPathway" id="UPA00060">
    <property type="reaction ID" value="UER00141"/>
</dbReference>
<dbReference type="Proteomes" id="UP000001566">
    <property type="component" value="Chromosome"/>
</dbReference>
<dbReference type="GO" id="GO:0005737">
    <property type="term" value="C:cytoplasm"/>
    <property type="evidence" value="ECO:0007669"/>
    <property type="project" value="TreeGrafter"/>
</dbReference>
<dbReference type="GO" id="GO:0000287">
    <property type="term" value="F:magnesium ion binding"/>
    <property type="evidence" value="ECO:0007669"/>
    <property type="project" value="UniProtKB-UniRule"/>
</dbReference>
<dbReference type="GO" id="GO:0004789">
    <property type="term" value="F:thiamine-phosphate diphosphorylase activity"/>
    <property type="evidence" value="ECO:0007669"/>
    <property type="project" value="UniProtKB-UniRule"/>
</dbReference>
<dbReference type="GO" id="GO:0009228">
    <property type="term" value="P:thiamine biosynthetic process"/>
    <property type="evidence" value="ECO:0007669"/>
    <property type="project" value="UniProtKB-KW"/>
</dbReference>
<dbReference type="GO" id="GO:0009229">
    <property type="term" value="P:thiamine diphosphate biosynthetic process"/>
    <property type="evidence" value="ECO:0007669"/>
    <property type="project" value="UniProtKB-UniRule"/>
</dbReference>
<dbReference type="CDD" id="cd00564">
    <property type="entry name" value="TMP_TenI"/>
    <property type="match status" value="1"/>
</dbReference>
<dbReference type="FunFam" id="3.20.20.70:FF:000096">
    <property type="entry name" value="Thiamine-phosphate synthase"/>
    <property type="match status" value="1"/>
</dbReference>
<dbReference type="Gene3D" id="3.20.20.70">
    <property type="entry name" value="Aldolase class I"/>
    <property type="match status" value="1"/>
</dbReference>
<dbReference type="HAMAP" id="MF_00097">
    <property type="entry name" value="TMP_synthase"/>
    <property type="match status" value="1"/>
</dbReference>
<dbReference type="HAMAP" id="MF_01327">
    <property type="entry name" value="TMP_synthase_cyanobact"/>
    <property type="match status" value="1"/>
</dbReference>
<dbReference type="InterPro" id="IPR013785">
    <property type="entry name" value="Aldolase_TIM"/>
</dbReference>
<dbReference type="InterPro" id="IPR036206">
    <property type="entry name" value="ThiamineP_synth_sf"/>
</dbReference>
<dbReference type="InterPro" id="IPR022998">
    <property type="entry name" value="ThiamineP_synth_TenI"/>
</dbReference>
<dbReference type="InterPro" id="IPR041397">
    <property type="entry name" value="ThiD2"/>
</dbReference>
<dbReference type="InterPro" id="IPR034291">
    <property type="entry name" value="TMP_synthase"/>
</dbReference>
<dbReference type="InterPro" id="IPR016229">
    <property type="entry name" value="TMP_synthase_cyanobac_bac"/>
</dbReference>
<dbReference type="NCBIfam" id="NF002727">
    <property type="entry name" value="PRK02615.1"/>
    <property type="match status" value="1"/>
</dbReference>
<dbReference type="NCBIfam" id="TIGR00693">
    <property type="entry name" value="thiE"/>
    <property type="match status" value="1"/>
</dbReference>
<dbReference type="PANTHER" id="PTHR20857">
    <property type="entry name" value="THIAMINE-PHOSPHATE PYROPHOSPHORYLASE"/>
    <property type="match status" value="1"/>
</dbReference>
<dbReference type="PANTHER" id="PTHR20857:SF15">
    <property type="entry name" value="THIAMINE-PHOSPHATE SYNTHASE"/>
    <property type="match status" value="1"/>
</dbReference>
<dbReference type="Pfam" id="PF17792">
    <property type="entry name" value="ThiD2"/>
    <property type="match status" value="1"/>
</dbReference>
<dbReference type="Pfam" id="PF02581">
    <property type="entry name" value="TMP-TENI"/>
    <property type="match status" value="1"/>
</dbReference>
<dbReference type="PIRSF" id="PIRSF000512">
    <property type="entry name" value="TMP_PPase_Cyanobac_prd"/>
    <property type="match status" value="1"/>
</dbReference>
<dbReference type="SUPFAM" id="SSF51391">
    <property type="entry name" value="Thiamin phosphate synthase"/>
    <property type="match status" value="1"/>
</dbReference>
<comment type="function">
    <text evidence="1">Condenses 4-methyl-5-(beta-hydroxyethyl)thiazole monophosphate (THZ-P) and 2-methyl-4-amino-5-hydroxymethyl pyrimidine pyrophosphate (HMP-PP) to form thiamine monophosphate (TMP).</text>
</comment>
<comment type="catalytic activity">
    <reaction evidence="1">
        <text>2-[(2R,5Z)-2-carboxy-4-methylthiazol-5(2H)-ylidene]ethyl phosphate + 4-amino-2-methyl-5-(diphosphooxymethyl)pyrimidine + 2 H(+) = thiamine phosphate + CO2 + diphosphate</text>
        <dbReference type="Rhea" id="RHEA:47844"/>
        <dbReference type="ChEBI" id="CHEBI:15378"/>
        <dbReference type="ChEBI" id="CHEBI:16526"/>
        <dbReference type="ChEBI" id="CHEBI:33019"/>
        <dbReference type="ChEBI" id="CHEBI:37575"/>
        <dbReference type="ChEBI" id="CHEBI:57841"/>
        <dbReference type="ChEBI" id="CHEBI:62899"/>
        <dbReference type="EC" id="2.5.1.3"/>
    </reaction>
</comment>
<comment type="catalytic activity">
    <reaction evidence="1">
        <text>2-(2-carboxy-4-methylthiazol-5-yl)ethyl phosphate + 4-amino-2-methyl-5-(diphosphooxymethyl)pyrimidine + 2 H(+) = thiamine phosphate + CO2 + diphosphate</text>
        <dbReference type="Rhea" id="RHEA:47848"/>
        <dbReference type="ChEBI" id="CHEBI:15378"/>
        <dbReference type="ChEBI" id="CHEBI:16526"/>
        <dbReference type="ChEBI" id="CHEBI:33019"/>
        <dbReference type="ChEBI" id="CHEBI:37575"/>
        <dbReference type="ChEBI" id="CHEBI:57841"/>
        <dbReference type="ChEBI" id="CHEBI:62890"/>
        <dbReference type="EC" id="2.5.1.3"/>
    </reaction>
</comment>
<comment type="catalytic activity">
    <reaction evidence="1">
        <text>4-methyl-5-(2-phosphooxyethyl)-thiazole + 4-amino-2-methyl-5-(diphosphooxymethyl)pyrimidine + H(+) = thiamine phosphate + diphosphate</text>
        <dbReference type="Rhea" id="RHEA:22328"/>
        <dbReference type="ChEBI" id="CHEBI:15378"/>
        <dbReference type="ChEBI" id="CHEBI:33019"/>
        <dbReference type="ChEBI" id="CHEBI:37575"/>
        <dbReference type="ChEBI" id="CHEBI:57841"/>
        <dbReference type="ChEBI" id="CHEBI:58296"/>
        <dbReference type="EC" id="2.5.1.3"/>
    </reaction>
</comment>
<comment type="cofactor">
    <cofactor evidence="1">
        <name>Mg(2+)</name>
        <dbReference type="ChEBI" id="CHEBI:18420"/>
    </cofactor>
    <text evidence="1">Binds 1 Mg(2+) ion per subunit.</text>
</comment>
<comment type="pathway">
    <text evidence="1">Cofactor biosynthesis; thiamine diphosphate biosynthesis; thiamine phosphate from 4-amino-2-methyl-5-diphosphomethylpyrimidine and 4-methyl-5-(2-phosphoethyl)-thiazole: step 1/1.</text>
</comment>
<comment type="similarity">
    <text evidence="1">Belongs to the thiamine-phosphate synthase family.</text>
</comment>